<feature type="chain" id="PRO_0000192281" description="Ribosomal protein L11 methyltransferase">
    <location>
        <begin position="1"/>
        <end position="295"/>
    </location>
</feature>
<feature type="binding site" evidence="1">
    <location>
        <position position="150"/>
    </location>
    <ligand>
        <name>S-adenosyl-L-methionine</name>
        <dbReference type="ChEBI" id="CHEBI:59789"/>
    </ligand>
</feature>
<feature type="binding site" evidence="1">
    <location>
        <position position="171"/>
    </location>
    <ligand>
        <name>S-adenosyl-L-methionine</name>
        <dbReference type="ChEBI" id="CHEBI:59789"/>
    </ligand>
</feature>
<feature type="binding site" evidence="1">
    <location>
        <position position="193"/>
    </location>
    <ligand>
        <name>S-adenosyl-L-methionine</name>
        <dbReference type="ChEBI" id="CHEBI:59789"/>
    </ligand>
</feature>
<feature type="binding site" evidence="1">
    <location>
        <position position="232"/>
    </location>
    <ligand>
        <name>S-adenosyl-L-methionine</name>
        <dbReference type="ChEBI" id="CHEBI:59789"/>
    </ligand>
</feature>
<comment type="function">
    <text evidence="1">Methylates ribosomal protein L11.</text>
</comment>
<comment type="catalytic activity">
    <reaction evidence="1">
        <text>L-lysyl-[protein] + 3 S-adenosyl-L-methionine = N(6),N(6),N(6)-trimethyl-L-lysyl-[protein] + 3 S-adenosyl-L-homocysteine + 3 H(+)</text>
        <dbReference type="Rhea" id="RHEA:54192"/>
        <dbReference type="Rhea" id="RHEA-COMP:9752"/>
        <dbReference type="Rhea" id="RHEA-COMP:13826"/>
        <dbReference type="ChEBI" id="CHEBI:15378"/>
        <dbReference type="ChEBI" id="CHEBI:29969"/>
        <dbReference type="ChEBI" id="CHEBI:57856"/>
        <dbReference type="ChEBI" id="CHEBI:59789"/>
        <dbReference type="ChEBI" id="CHEBI:61961"/>
    </reaction>
</comment>
<comment type="subcellular location">
    <subcellularLocation>
        <location evidence="1">Cytoplasm</location>
    </subcellularLocation>
</comment>
<comment type="similarity">
    <text evidence="1">Belongs to the methyltransferase superfamily. PrmA family.</text>
</comment>
<organism>
    <name type="scientific">Neisseria meningitidis serogroup A / serotype 4A (strain DSM 15465 / Z2491)</name>
    <dbReference type="NCBI Taxonomy" id="122587"/>
    <lineage>
        <taxon>Bacteria</taxon>
        <taxon>Pseudomonadati</taxon>
        <taxon>Pseudomonadota</taxon>
        <taxon>Betaproteobacteria</taxon>
        <taxon>Neisseriales</taxon>
        <taxon>Neisseriaceae</taxon>
        <taxon>Neisseria</taxon>
    </lineage>
</organism>
<name>PRMA_NEIMA</name>
<protein>
    <recommendedName>
        <fullName evidence="1">Ribosomal protein L11 methyltransferase</fullName>
        <shortName evidence="1">L11 Mtase</shortName>
        <ecNumber evidence="1">2.1.1.-</ecNumber>
    </recommendedName>
</protein>
<gene>
    <name evidence="1" type="primary">prmA</name>
    <name type="ordered locus">NMA0595</name>
</gene>
<dbReference type="EC" id="2.1.1.-" evidence="1"/>
<dbReference type="EMBL" id="AL157959">
    <property type="protein sequence ID" value="CAM07863.1"/>
    <property type="molecule type" value="Genomic_DNA"/>
</dbReference>
<dbReference type="PIR" id="G81978">
    <property type="entry name" value="G81978"/>
</dbReference>
<dbReference type="RefSeq" id="WP_002246428.1">
    <property type="nucleotide sequence ID" value="NC_003116.1"/>
</dbReference>
<dbReference type="SMR" id="Q9JW08"/>
<dbReference type="EnsemblBacteria" id="CAM07863">
    <property type="protein sequence ID" value="CAM07863"/>
    <property type="gene ID" value="NMA0595"/>
</dbReference>
<dbReference type="GeneID" id="93386767"/>
<dbReference type="KEGG" id="nma:NMA0595"/>
<dbReference type="HOGENOM" id="CLU_049382_4_1_4"/>
<dbReference type="Proteomes" id="UP000000626">
    <property type="component" value="Chromosome"/>
</dbReference>
<dbReference type="GO" id="GO:0005829">
    <property type="term" value="C:cytosol"/>
    <property type="evidence" value="ECO:0007669"/>
    <property type="project" value="TreeGrafter"/>
</dbReference>
<dbReference type="GO" id="GO:0016279">
    <property type="term" value="F:protein-lysine N-methyltransferase activity"/>
    <property type="evidence" value="ECO:0007669"/>
    <property type="project" value="TreeGrafter"/>
</dbReference>
<dbReference type="GO" id="GO:0032259">
    <property type="term" value="P:methylation"/>
    <property type="evidence" value="ECO:0007669"/>
    <property type="project" value="UniProtKB-KW"/>
</dbReference>
<dbReference type="CDD" id="cd02440">
    <property type="entry name" value="AdoMet_MTases"/>
    <property type="match status" value="1"/>
</dbReference>
<dbReference type="Gene3D" id="3.40.50.150">
    <property type="entry name" value="Vaccinia Virus protein VP39"/>
    <property type="match status" value="1"/>
</dbReference>
<dbReference type="HAMAP" id="MF_00735">
    <property type="entry name" value="Methyltr_PrmA"/>
    <property type="match status" value="1"/>
</dbReference>
<dbReference type="InterPro" id="IPR050078">
    <property type="entry name" value="Ribosomal_L11_MeTrfase_PrmA"/>
</dbReference>
<dbReference type="InterPro" id="IPR004498">
    <property type="entry name" value="Ribosomal_PrmA_MeTrfase"/>
</dbReference>
<dbReference type="InterPro" id="IPR029063">
    <property type="entry name" value="SAM-dependent_MTases_sf"/>
</dbReference>
<dbReference type="NCBIfam" id="TIGR00406">
    <property type="entry name" value="prmA"/>
    <property type="match status" value="1"/>
</dbReference>
<dbReference type="PANTHER" id="PTHR43648">
    <property type="entry name" value="ELECTRON TRANSFER FLAVOPROTEIN BETA SUBUNIT LYSINE METHYLTRANSFERASE"/>
    <property type="match status" value="1"/>
</dbReference>
<dbReference type="PANTHER" id="PTHR43648:SF1">
    <property type="entry name" value="ELECTRON TRANSFER FLAVOPROTEIN BETA SUBUNIT LYSINE METHYLTRANSFERASE"/>
    <property type="match status" value="1"/>
</dbReference>
<dbReference type="Pfam" id="PF06325">
    <property type="entry name" value="PrmA"/>
    <property type="match status" value="1"/>
</dbReference>
<dbReference type="PIRSF" id="PIRSF000401">
    <property type="entry name" value="RPL11_MTase"/>
    <property type="match status" value="1"/>
</dbReference>
<dbReference type="SUPFAM" id="SSF53335">
    <property type="entry name" value="S-adenosyl-L-methionine-dependent methyltransferases"/>
    <property type="match status" value="1"/>
</dbReference>
<reference key="1">
    <citation type="journal article" date="2000" name="Nature">
        <title>Complete DNA sequence of a serogroup A strain of Neisseria meningitidis Z2491.</title>
        <authorList>
            <person name="Parkhill J."/>
            <person name="Achtman M."/>
            <person name="James K.D."/>
            <person name="Bentley S.D."/>
            <person name="Churcher C.M."/>
            <person name="Klee S.R."/>
            <person name="Morelli G."/>
            <person name="Basham D."/>
            <person name="Brown D."/>
            <person name="Chillingworth T."/>
            <person name="Davies R.M."/>
            <person name="Davis P."/>
            <person name="Devlin K."/>
            <person name="Feltwell T."/>
            <person name="Hamlin N."/>
            <person name="Holroyd S."/>
            <person name="Jagels K."/>
            <person name="Leather S."/>
            <person name="Moule S."/>
            <person name="Mungall K.L."/>
            <person name="Quail M.A."/>
            <person name="Rajandream M.A."/>
            <person name="Rutherford K.M."/>
            <person name="Simmonds M."/>
            <person name="Skelton J."/>
            <person name="Whitehead S."/>
            <person name="Spratt B.G."/>
            <person name="Barrell B.G."/>
        </authorList>
    </citation>
    <scope>NUCLEOTIDE SEQUENCE [LARGE SCALE GENOMIC DNA]</scope>
    <source>
        <strain>DSM 15465 / Z2491</strain>
    </source>
</reference>
<accession>Q9JW08</accession>
<accession>A1IQ37</accession>
<keyword id="KW-0963">Cytoplasm</keyword>
<keyword id="KW-0489">Methyltransferase</keyword>
<keyword id="KW-0949">S-adenosyl-L-methionine</keyword>
<keyword id="KW-0808">Transferase</keyword>
<sequence length="295" mass="32035">MPYQQITVNVNDAVAERLADALMEHGALSAAIEDAYAGTQNEQAIFGEPGMPAEQIWQQSKVIALFGEHDEAAAIIQTAAQECGLKDLAYTGEILEDQDWVRLTQAQFDPIRISERLWITPSWHEAPEDTAVNLRLDPGLAFGTGSHPTTRLCLKWLDTQLKNGESVLDYGCGSGILTIAALKLGAGFAVGVDIDEQAVRAGKDNAEQNNVDAQFFLPDGLPQGQFDVVVANILANPLRMLGEMLAARTKQGGRIVLSGLLDEQAEELGGIYSQWFDLDPAETEEGWARLSGTKR</sequence>
<proteinExistence type="inferred from homology"/>
<evidence type="ECO:0000255" key="1">
    <source>
        <dbReference type="HAMAP-Rule" id="MF_00735"/>
    </source>
</evidence>